<proteinExistence type="inferred from homology"/>
<keyword id="KW-0067">ATP-binding</keyword>
<keyword id="KW-0963">Cytoplasm</keyword>
<keyword id="KW-0275">Fatty acid biosynthesis</keyword>
<keyword id="KW-0276">Fatty acid metabolism</keyword>
<keyword id="KW-0444">Lipid biosynthesis</keyword>
<keyword id="KW-0443">Lipid metabolism</keyword>
<keyword id="KW-0547">Nucleotide-binding</keyword>
<keyword id="KW-1185">Reference proteome</keyword>
<keyword id="KW-0808">Transferase</keyword>
<sequence length="329" mass="36197">MARRPLLEFEKPLIELEQQIEQIRQLARDSEVDVSQQLLQLETLAARRREEIFQNLTPAQKIQVARHPHRPSTLDFIQMFCDDWVELHGDRRGSDDQALVGGLGRIGDRSVVLLGHQKGRDTKENVARNFGMATPGGYRKALRLMEHADRFGLPIFAFIDTPGAYAGLLAEEQGQGEAIAVNLREMFRLRVPIIATVIGEGGSGGALGIGVADRLLMFEHSVYTVASPEACASILWRDAAKAPEAAAALRITGKDLLSLGVVDEVLAEPSGGNNWAPLEAGATLREALERNLSELLALPPQELRDQRYRKFRAMGRFIDQASSDADSAS</sequence>
<accession>Q0I8N1</accession>
<dbReference type="EC" id="2.1.3.15" evidence="1"/>
<dbReference type="EMBL" id="CP000435">
    <property type="protein sequence ID" value="ABI45895.1"/>
    <property type="molecule type" value="Genomic_DNA"/>
</dbReference>
<dbReference type="RefSeq" id="WP_011619903.1">
    <property type="nucleotide sequence ID" value="NC_008319.1"/>
</dbReference>
<dbReference type="SMR" id="Q0I8N1"/>
<dbReference type="STRING" id="64471.sync_1988"/>
<dbReference type="KEGG" id="syg:sync_1988"/>
<dbReference type="eggNOG" id="COG0825">
    <property type="taxonomic scope" value="Bacteria"/>
</dbReference>
<dbReference type="HOGENOM" id="CLU_015486_0_2_3"/>
<dbReference type="OrthoDB" id="9808023at2"/>
<dbReference type="UniPathway" id="UPA00655">
    <property type="reaction ID" value="UER00711"/>
</dbReference>
<dbReference type="Proteomes" id="UP000001961">
    <property type="component" value="Chromosome"/>
</dbReference>
<dbReference type="GO" id="GO:0009317">
    <property type="term" value="C:acetyl-CoA carboxylase complex"/>
    <property type="evidence" value="ECO:0007669"/>
    <property type="project" value="InterPro"/>
</dbReference>
<dbReference type="GO" id="GO:0003989">
    <property type="term" value="F:acetyl-CoA carboxylase activity"/>
    <property type="evidence" value="ECO:0007669"/>
    <property type="project" value="InterPro"/>
</dbReference>
<dbReference type="GO" id="GO:0005524">
    <property type="term" value="F:ATP binding"/>
    <property type="evidence" value="ECO:0007669"/>
    <property type="project" value="UniProtKB-KW"/>
</dbReference>
<dbReference type="GO" id="GO:0016743">
    <property type="term" value="F:carboxyl- or carbamoyltransferase activity"/>
    <property type="evidence" value="ECO:0007669"/>
    <property type="project" value="UniProtKB-UniRule"/>
</dbReference>
<dbReference type="GO" id="GO:0006633">
    <property type="term" value="P:fatty acid biosynthetic process"/>
    <property type="evidence" value="ECO:0007669"/>
    <property type="project" value="UniProtKB-KW"/>
</dbReference>
<dbReference type="GO" id="GO:2001295">
    <property type="term" value="P:malonyl-CoA biosynthetic process"/>
    <property type="evidence" value="ECO:0007669"/>
    <property type="project" value="UniProtKB-UniRule"/>
</dbReference>
<dbReference type="Gene3D" id="3.90.226.10">
    <property type="entry name" value="2-enoyl-CoA Hydratase, Chain A, domain 1"/>
    <property type="match status" value="1"/>
</dbReference>
<dbReference type="HAMAP" id="MF_00823">
    <property type="entry name" value="AcetylCoA_CT_alpha"/>
    <property type="match status" value="1"/>
</dbReference>
<dbReference type="InterPro" id="IPR001095">
    <property type="entry name" value="Acetyl_CoA_COase_a_su"/>
</dbReference>
<dbReference type="InterPro" id="IPR029045">
    <property type="entry name" value="ClpP/crotonase-like_dom_sf"/>
</dbReference>
<dbReference type="InterPro" id="IPR011763">
    <property type="entry name" value="COA_CT_C"/>
</dbReference>
<dbReference type="NCBIfam" id="TIGR00513">
    <property type="entry name" value="accA"/>
    <property type="match status" value="1"/>
</dbReference>
<dbReference type="NCBIfam" id="NF041504">
    <property type="entry name" value="AccA_sub"/>
    <property type="match status" value="1"/>
</dbReference>
<dbReference type="NCBIfam" id="NF004344">
    <property type="entry name" value="PRK05724.1"/>
    <property type="match status" value="1"/>
</dbReference>
<dbReference type="PANTHER" id="PTHR42853">
    <property type="entry name" value="ACETYL-COENZYME A CARBOXYLASE CARBOXYL TRANSFERASE SUBUNIT ALPHA"/>
    <property type="match status" value="1"/>
</dbReference>
<dbReference type="PANTHER" id="PTHR42853:SF3">
    <property type="entry name" value="ACETYL-COENZYME A CARBOXYLASE CARBOXYL TRANSFERASE SUBUNIT ALPHA, CHLOROPLASTIC"/>
    <property type="match status" value="1"/>
</dbReference>
<dbReference type="Pfam" id="PF03255">
    <property type="entry name" value="ACCA"/>
    <property type="match status" value="1"/>
</dbReference>
<dbReference type="PRINTS" id="PR01069">
    <property type="entry name" value="ACCCTRFRASEA"/>
</dbReference>
<dbReference type="SUPFAM" id="SSF52096">
    <property type="entry name" value="ClpP/crotonase"/>
    <property type="match status" value="1"/>
</dbReference>
<dbReference type="PROSITE" id="PS50989">
    <property type="entry name" value="COA_CT_CTER"/>
    <property type="match status" value="1"/>
</dbReference>
<gene>
    <name evidence="1" type="primary">accA</name>
    <name type="ordered locus">sync_1988</name>
</gene>
<evidence type="ECO:0000255" key="1">
    <source>
        <dbReference type="HAMAP-Rule" id="MF_00823"/>
    </source>
</evidence>
<evidence type="ECO:0000255" key="2">
    <source>
        <dbReference type="PROSITE-ProRule" id="PRU01137"/>
    </source>
</evidence>
<organism>
    <name type="scientific">Synechococcus sp. (strain CC9311)</name>
    <dbReference type="NCBI Taxonomy" id="64471"/>
    <lineage>
        <taxon>Bacteria</taxon>
        <taxon>Bacillati</taxon>
        <taxon>Cyanobacteriota</taxon>
        <taxon>Cyanophyceae</taxon>
        <taxon>Synechococcales</taxon>
        <taxon>Synechococcaceae</taxon>
        <taxon>Synechococcus</taxon>
    </lineage>
</organism>
<name>ACCA_SYNS3</name>
<protein>
    <recommendedName>
        <fullName evidence="1">Acetyl-coenzyme A carboxylase carboxyl transferase subunit alpha</fullName>
        <shortName evidence="1">ACCase subunit alpha</shortName>
        <shortName evidence="1">Acetyl-CoA carboxylase carboxyltransferase subunit alpha</shortName>
        <ecNumber evidence="1">2.1.3.15</ecNumber>
    </recommendedName>
</protein>
<comment type="function">
    <text evidence="1">Component of the acetyl coenzyme A carboxylase (ACC) complex. First, biotin carboxylase catalyzes the carboxylation of biotin on its carrier protein (BCCP) and then the CO(2) group is transferred by the carboxyltransferase to acetyl-CoA to form malonyl-CoA.</text>
</comment>
<comment type="catalytic activity">
    <reaction evidence="1">
        <text>N(6)-carboxybiotinyl-L-lysyl-[protein] + acetyl-CoA = N(6)-biotinyl-L-lysyl-[protein] + malonyl-CoA</text>
        <dbReference type="Rhea" id="RHEA:54728"/>
        <dbReference type="Rhea" id="RHEA-COMP:10505"/>
        <dbReference type="Rhea" id="RHEA-COMP:10506"/>
        <dbReference type="ChEBI" id="CHEBI:57288"/>
        <dbReference type="ChEBI" id="CHEBI:57384"/>
        <dbReference type="ChEBI" id="CHEBI:83144"/>
        <dbReference type="ChEBI" id="CHEBI:83145"/>
        <dbReference type="EC" id="2.1.3.15"/>
    </reaction>
</comment>
<comment type="pathway">
    <text evidence="1">Lipid metabolism; malonyl-CoA biosynthesis; malonyl-CoA from acetyl-CoA: step 1/1.</text>
</comment>
<comment type="subunit">
    <text evidence="1">Acetyl-CoA carboxylase is a heterohexamer composed of biotin carboxyl carrier protein (AccB), biotin carboxylase (AccC) and two subunits each of ACCase subunit alpha (AccA) and ACCase subunit beta (AccD).</text>
</comment>
<comment type="subcellular location">
    <subcellularLocation>
        <location evidence="1">Cytoplasm</location>
    </subcellularLocation>
</comment>
<comment type="similarity">
    <text evidence="1">Belongs to the AccA family.</text>
</comment>
<feature type="chain" id="PRO_1000062691" description="Acetyl-coenzyme A carboxylase carboxyl transferase subunit alpha">
    <location>
        <begin position="1"/>
        <end position="329"/>
    </location>
</feature>
<feature type="domain" description="CoA carboxyltransferase C-terminal" evidence="2">
    <location>
        <begin position="40"/>
        <end position="294"/>
    </location>
</feature>
<reference key="1">
    <citation type="journal article" date="2006" name="Proc. Natl. Acad. Sci. U.S.A.">
        <title>Genome sequence of Synechococcus CC9311: insights into adaptation to a coastal environment.</title>
        <authorList>
            <person name="Palenik B."/>
            <person name="Ren Q."/>
            <person name="Dupont C.L."/>
            <person name="Myers G.S."/>
            <person name="Heidelberg J.F."/>
            <person name="Badger J.H."/>
            <person name="Madupu R."/>
            <person name="Nelson W.C."/>
            <person name="Brinkac L.M."/>
            <person name="Dodson R.J."/>
            <person name="Durkin A.S."/>
            <person name="Daugherty S.C."/>
            <person name="Sullivan S.A."/>
            <person name="Khouri H."/>
            <person name="Mohamoud Y."/>
            <person name="Halpin R."/>
            <person name="Paulsen I.T."/>
        </authorList>
    </citation>
    <scope>NUCLEOTIDE SEQUENCE [LARGE SCALE GENOMIC DNA]</scope>
    <source>
        <strain>CC9311</strain>
    </source>
</reference>